<evidence type="ECO:0000250" key="1"/>
<evidence type="ECO:0000305" key="2"/>
<evidence type="ECO:0007829" key="3">
    <source>
        <dbReference type="PDB" id="2HMA"/>
    </source>
</evidence>
<sequence>MSDNSKTRVVVGMSGGVDSSVTALLLKEQGYDVIGIFMKNWDDTDENGVCTATEDYKDVVAVADQIGIPYYSVNFEKEYWDRVFEYFLAEYRAGRTPNPDVMCNKEIKFKAFLDYAITLGADYVATGHYARVARDEDGTVHMLRGVDNGKDQTYFLSQLSQEQLQKTMFPLGHLEKPEVRRLAEEAGLSTAKKKDSTGICFIGEKNFKNFLSNYLPAQPGRMMTVDGRDMGEHAGLMYYTIGQRGGLGIGGQHGGDNAPWFVVGKDLSKNILYVGQGFYHDSLMSTSLEASQVHFTREMPEEFTLECTAKFRYRQPDSKVTVHVKGEKTEVIFAEPQRAITPGQAVVFYDGEECLGGGLIDNAYRDGQVCQYI</sequence>
<keyword id="KW-0002">3D-structure</keyword>
<keyword id="KW-0067">ATP-binding</keyword>
<keyword id="KW-0963">Cytoplasm</keyword>
<keyword id="KW-1015">Disulfide bond</keyword>
<keyword id="KW-0547">Nucleotide-binding</keyword>
<keyword id="KW-1185">Reference proteome</keyword>
<keyword id="KW-0694">RNA-binding</keyword>
<keyword id="KW-0808">Transferase</keyword>
<keyword id="KW-0819">tRNA processing</keyword>
<keyword id="KW-0820">tRNA-binding</keyword>
<proteinExistence type="evidence at protein level"/>
<reference key="1">
    <citation type="journal article" date="2001" name="Science">
        <title>Complete genome sequence of a virulent isolate of Streptococcus pneumoniae.</title>
        <authorList>
            <person name="Tettelin H."/>
            <person name="Nelson K.E."/>
            <person name="Paulsen I.T."/>
            <person name="Eisen J.A."/>
            <person name="Read T.D."/>
            <person name="Peterson S.N."/>
            <person name="Heidelberg J.F."/>
            <person name="DeBoy R.T."/>
            <person name="Haft D.H."/>
            <person name="Dodson R.J."/>
            <person name="Durkin A.S."/>
            <person name="Gwinn M.L."/>
            <person name="Kolonay J.F."/>
            <person name="Nelson W.C."/>
            <person name="Peterson J.D."/>
            <person name="Umayam L.A."/>
            <person name="White O."/>
            <person name="Salzberg S.L."/>
            <person name="Lewis M.R."/>
            <person name="Radune D."/>
            <person name="Holtzapple E.K."/>
            <person name="Khouri H.M."/>
            <person name="Wolf A.M."/>
            <person name="Utterback T.R."/>
            <person name="Hansen C.L."/>
            <person name="McDonald L.A."/>
            <person name="Feldblyum T.V."/>
            <person name="Angiuoli S.V."/>
            <person name="Dickinson T."/>
            <person name="Hickey E.K."/>
            <person name="Holt I.E."/>
            <person name="Loftus B.J."/>
            <person name="Yang F."/>
            <person name="Smith H.O."/>
            <person name="Venter J.C."/>
            <person name="Dougherty B.A."/>
            <person name="Morrison D.A."/>
            <person name="Hollingshead S.K."/>
            <person name="Fraser C.M."/>
        </authorList>
    </citation>
    <scope>NUCLEOTIDE SEQUENCE [LARGE SCALE GENOMIC DNA]</scope>
    <source>
        <strain>ATCC BAA-334 / TIGR4</strain>
    </source>
</reference>
<reference key="2">
    <citation type="submission" date="2006-08" db="PDB data bank">
        <title>The crystal structure of tRNA (5-methylaminomethyl-2-thiouridylate)-methyltransferase trmU from Streptococcus pneumoniae.</title>
        <authorList>
            <consortium name="Midwest center for structural genomics (MCSG)"/>
        </authorList>
    </citation>
    <scope>X-RAY CRYSTALLOGRAPHY (2.41 ANGSTROMS) IN COMPLEX WITH S-ADENOSYL-L-METHIONINE</scope>
</reference>
<comment type="function">
    <text evidence="1">Catalyzes the 2-thiolation of uridine at the wobble position (U34) of tRNA, leading to the formation of s(2)U34.</text>
</comment>
<comment type="catalytic activity">
    <reaction>
        <text>S-sulfanyl-L-cysteinyl-[protein] + uridine(34) in tRNA + AH2 + ATP = 2-thiouridine(34) in tRNA + L-cysteinyl-[protein] + A + AMP + diphosphate + H(+)</text>
        <dbReference type="Rhea" id="RHEA:47032"/>
        <dbReference type="Rhea" id="RHEA-COMP:10131"/>
        <dbReference type="Rhea" id="RHEA-COMP:11726"/>
        <dbReference type="Rhea" id="RHEA-COMP:11727"/>
        <dbReference type="Rhea" id="RHEA-COMP:11728"/>
        <dbReference type="ChEBI" id="CHEBI:13193"/>
        <dbReference type="ChEBI" id="CHEBI:15378"/>
        <dbReference type="ChEBI" id="CHEBI:17499"/>
        <dbReference type="ChEBI" id="CHEBI:29950"/>
        <dbReference type="ChEBI" id="CHEBI:30616"/>
        <dbReference type="ChEBI" id="CHEBI:33019"/>
        <dbReference type="ChEBI" id="CHEBI:61963"/>
        <dbReference type="ChEBI" id="CHEBI:65315"/>
        <dbReference type="ChEBI" id="CHEBI:87170"/>
        <dbReference type="ChEBI" id="CHEBI:456215"/>
        <dbReference type="EC" id="2.8.1.13"/>
    </reaction>
</comment>
<comment type="subcellular location">
    <subcellularLocation>
        <location evidence="1">Cytoplasm</location>
    </subcellularLocation>
</comment>
<comment type="similarity">
    <text evidence="2">Belongs to the MnmA/TRMU family.</text>
</comment>
<gene>
    <name type="primary">mnmA</name>
    <name type="synonym">trmU</name>
    <name type="ordered locus">SP_0118</name>
</gene>
<name>MNMA_STRPN</name>
<organism>
    <name type="scientific">Streptococcus pneumoniae serotype 4 (strain ATCC BAA-334 / TIGR4)</name>
    <dbReference type="NCBI Taxonomy" id="170187"/>
    <lineage>
        <taxon>Bacteria</taxon>
        <taxon>Bacillati</taxon>
        <taxon>Bacillota</taxon>
        <taxon>Bacilli</taxon>
        <taxon>Lactobacillales</taxon>
        <taxon>Streptococcaceae</taxon>
        <taxon>Streptococcus</taxon>
    </lineage>
</organism>
<protein>
    <recommendedName>
        <fullName>tRNA-specific 2-thiouridylase MnmA</fullName>
        <ecNumber>2.8.1.13</ecNumber>
    </recommendedName>
</protein>
<feature type="chain" id="PRO_0000121685" description="tRNA-specific 2-thiouridylase MnmA">
    <location>
        <begin position="1"/>
        <end position="373"/>
    </location>
</feature>
<feature type="region of interest" description="Interaction with target base in tRNA" evidence="1">
    <location>
        <begin position="98"/>
        <end position="100"/>
    </location>
</feature>
<feature type="region of interest" description="Interaction with tRNA" evidence="1">
    <location>
        <begin position="150"/>
        <end position="152"/>
    </location>
</feature>
<feature type="region of interest" description="Interaction with tRNA" evidence="1">
    <location>
        <begin position="244"/>
        <end position="253"/>
    </location>
</feature>
<feature type="region of interest" description="Interaction with tRNA" evidence="1">
    <location>
        <begin position="312"/>
        <end position="313"/>
    </location>
</feature>
<feature type="active site" description="Nucleophile" evidence="1">
    <location>
        <position position="103"/>
    </location>
</feature>
<feature type="active site" description="Cysteine persulfide intermediate" evidence="1">
    <location>
        <position position="200"/>
    </location>
</feature>
<feature type="binding site">
    <location>
        <begin position="12"/>
        <end position="19"/>
    </location>
    <ligand>
        <name>ATP</name>
        <dbReference type="ChEBI" id="CHEBI:30616"/>
    </ligand>
</feature>
<feature type="binding site">
    <location>
        <position position="38"/>
    </location>
    <ligand>
        <name>ATP</name>
        <dbReference type="ChEBI" id="CHEBI:30616"/>
    </ligand>
</feature>
<feature type="binding site">
    <location>
        <position position="127"/>
    </location>
    <ligand>
        <name>ATP</name>
        <dbReference type="ChEBI" id="CHEBI:30616"/>
    </ligand>
</feature>
<feature type="site" description="Interaction with tRNA" evidence="1">
    <location>
        <position position="128"/>
    </location>
</feature>
<feature type="site" description="Interaction with tRNA" evidence="1">
    <location>
        <position position="344"/>
    </location>
</feature>
<feature type="disulfide bond" description="Alternate" evidence="1">
    <location>
        <begin position="103"/>
        <end position="200"/>
    </location>
</feature>
<feature type="helix" evidence="3">
    <location>
        <begin position="4"/>
        <end position="6"/>
    </location>
</feature>
<feature type="strand" evidence="3">
    <location>
        <begin position="7"/>
        <end position="12"/>
    </location>
</feature>
<feature type="helix" evidence="3">
    <location>
        <begin position="17"/>
        <end position="28"/>
    </location>
</feature>
<feature type="strand" evidence="3">
    <location>
        <begin position="32"/>
        <end position="39"/>
    </location>
</feature>
<feature type="helix" evidence="3">
    <location>
        <begin position="51"/>
        <end position="66"/>
    </location>
</feature>
<feature type="strand" evidence="3">
    <location>
        <begin position="70"/>
        <end position="74"/>
    </location>
</feature>
<feature type="helix" evidence="3">
    <location>
        <begin position="76"/>
        <end position="82"/>
    </location>
</feature>
<feature type="helix" evidence="3">
    <location>
        <begin position="84"/>
        <end position="92"/>
    </location>
</feature>
<feature type="helix" evidence="3">
    <location>
        <begin position="99"/>
        <end position="106"/>
    </location>
</feature>
<feature type="turn" evidence="3">
    <location>
        <begin position="107"/>
        <end position="110"/>
    </location>
</feature>
<feature type="helix" evidence="3">
    <location>
        <begin position="111"/>
        <end position="117"/>
    </location>
</feature>
<feature type="turn" evidence="3">
    <location>
        <begin position="118"/>
        <end position="120"/>
    </location>
</feature>
<feature type="strand" evidence="3">
    <location>
        <begin position="122"/>
        <end position="125"/>
    </location>
</feature>
<feature type="strand" evidence="3">
    <location>
        <begin position="129"/>
        <end position="134"/>
    </location>
</feature>
<feature type="strand" evidence="3">
    <location>
        <begin position="136"/>
        <end position="138"/>
    </location>
</feature>
<feature type="strand" evidence="3">
    <location>
        <begin position="140"/>
        <end position="144"/>
    </location>
</feature>
<feature type="turn" evidence="3">
    <location>
        <begin position="148"/>
        <end position="150"/>
    </location>
</feature>
<feature type="helix" evidence="3">
    <location>
        <begin position="153"/>
        <end position="156"/>
    </location>
</feature>
<feature type="helix" evidence="3">
    <location>
        <begin position="161"/>
        <end position="164"/>
    </location>
</feature>
<feature type="turn" evidence="3">
    <location>
        <begin position="170"/>
        <end position="173"/>
    </location>
</feature>
<feature type="helix" evidence="3">
    <location>
        <begin position="176"/>
        <end position="185"/>
    </location>
</feature>
<feature type="turn" evidence="3">
    <location>
        <begin position="189"/>
        <end position="192"/>
    </location>
</feature>
<feature type="turn" evidence="3">
    <location>
        <begin position="200"/>
        <end position="204"/>
    </location>
</feature>
<feature type="helix" evidence="3">
    <location>
        <begin position="207"/>
        <end position="212"/>
    </location>
</feature>
<feature type="strand" evidence="3">
    <location>
        <begin position="220"/>
        <end position="224"/>
    </location>
</feature>
<feature type="strand" evidence="3">
    <location>
        <begin position="229"/>
        <end position="234"/>
    </location>
</feature>
<feature type="helix" evidence="3">
    <location>
        <begin position="236"/>
        <end position="238"/>
    </location>
</feature>
<feature type="turn" evidence="3">
    <location>
        <begin position="247"/>
        <end position="250"/>
    </location>
</feature>
<feature type="strand" evidence="3">
    <location>
        <begin position="260"/>
        <end position="266"/>
    </location>
</feature>
<feature type="helix" evidence="3">
    <location>
        <begin position="267"/>
        <end position="269"/>
    </location>
</feature>
<feature type="strand" evidence="3">
    <location>
        <begin position="271"/>
        <end position="277"/>
    </location>
</feature>
<feature type="helix" evidence="3">
    <location>
        <begin position="281"/>
        <end position="283"/>
    </location>
</feature>
<feature type="strand" evidence="3">
    <location>
        <begin position="284"/>
        <end position="297"/>
    </location>
</feature>
<feature type="strand" evidence="3">
    <location>
        <begin position="301"/>
        <end position="312"/>
    </location>
</feature>
<feature type="strand" evidence="3">
    <location>
        <begin position="318"/>
        <end position="324"/>
    </location>
</feature>
<feature type="strand" evidence="3">
    <location>
        <begin position="329"/>
        <end position="338"/>
    </location>
</feature>
<feature type="strand" evidence="3">
    <location>
        <begin position="344"/>
        <end position="350"/>
    </location>
</feature>
<feature type="strand" evidence="3">
    <location>
        <begin position="353"/>
        <end position="369"/>
    </location>
</feature>
<dbReference type="EC" id="2.8.1.13"/>
<dbReference type="EMBL" id="AE005672">
    <property type="protein sequence ID" value="AAK74304.1"/>
    <property type="molecule type" value="Genomic_DNA"/>
</dbReference>
<dbReference type="PIR" id="G95013">
    <property type="entry name" value="G95013"/>
</dbReference>
<dbReference type="RefSeq" id="WP_001282969.1">
    <property type="nucleotide sequence ID" value="NZ_CP155539.1"/>
</dbReference>
<dbReference type="PDB" id="2HMA">
    <property type="method" value="X-ray"/>
    <property type="resolution" value="2.41 A"/>
    <property type="chains" value="A=1-373"/>
</dbReference>
<dbReference type="PDBsum" id="2HMA"/>
<dbReference type="SMR" id="Q97T38"/>
<dbReference type="PaxDb" id="170187-SP_0118"/>
<dbReference type="EnsemblBacteria" id="AAK74304">
    <property type="protein sequence ID" value="AAK74304"/>
    <property type="gene ID" value="SP_0118"/>
</dbReference>
<dbReference type="KEGG" id="spn:SP_0118"/>
<dbReference type="eggNOG" id="COG0482">
    <property type="taxonomic scope" value="Bacteria"/>
</dbReference>
<dbReference type="PhylomeDB" id="Q97T38"/>
<dbReference type="BioCyc" id="SPNE170187:G1FZB-123-MONOMER"/>
<dbReference type="EvolutionaryTrace" id="Q97T38"/>
<dbReference type="Proteomes" id="UP000000585">
    <property type="component" value="Chromosome"/>
</dbReference>
<dbReference type="GO" id="GO:0005737">
    <property type="term" value="C:cytoplasm"/>
    <property type="evidence" value="ECO:0007669"/>
    <property type="project" value="UniProtKB-SubCell"/>
</dbReference>
<dbReference type="GO" id="GO:0005524">
    <property type="term" value="F:ATP binding"/>
    <property type="evidence" value="ECO:0007669"/>
    <property type="project" value="UniProtKB-KW"/>
</dbReference>
<dbReference type="GO" id="GO:0000049">
    <property type="term" value="F:tRNA binding"/>
    <property type="evidence" value="ECO:0007669"/>
    <property type="project" value="UniProtKB-KW"/>
</dbReference>
<dbReference type="GO" id="GO:0103016">
    <property type="term" value="F:tRNA-uridine 2-sulfurtransferase activity"/>
    <property type="evidence" value="ECO:0007669"/>
    <property type="project" value="UniProtKB-EC"/>
</dbReference>
<dbReference type="GO" id="GO:0002143">
    <property type="term" value="P:tRNA wobble position uridine thiolation"/>
    <property type="evidence" value="ECO:0007669"/>
    <property type="project" value="TreeGrafter"/>
</dbReference>
<dbReference type="CDD" id="cd01998">
    <property type="entry name" value="MnmA_TRMU-like"/>
    <property type="match status" value="1"/>
</dbReference>
<dbReference type="FunFam" id="2.30.30.280:FF:000001">
    <property type="entry name" value="tRNA-specific 2-thiouridylase MnmA"/>
    <property type="match status" value="1"/>
</dbReference>
<dbReference type="FunFam" id="2.40.30.10:FF:000023">
    <property type="entry name" value="tRNA-specific 2-thiouridylase MnmA"/>
    <property type="match status" value="1"/>
</dbReference>
<dbReference type="FunFam" id="3.40.50.620:FF:000004">
    <property type="entry name" value="tRNA-specific 2-thiouridylase MnmA"/>
    <property type="match status" value="1"/>
</dbReference>
<dbReference type="Gene3D" id="2.30.30.280">
    <property type="entry name" value="Adenine nucleotide alpha hydrolases-like domains"/>
    <property type="match status" value="1"/>
</dbReference>
<dbReference type="Gene3D" id="3.40.50.620">
    <property type="entry name" value="HUPs"/>
    <property type="match status" value="1"/>
</dbReference>
<dbReference type="Gene3D" id="2.40.30.10">
    <property type="entry name" value="Translation factors"/>
    <property type="match status" value="1"/>
</dbReference>
<dbReference type="HAMAP" id="MF_00144">
    <property type="entry name" value="tRNA_thiouridyl_MnmA"/>
    <property type="match status" value="1"/>
</dbReference>
<dbReference type="InterPro" id="IPR004506">
    <property type="entry name" value="MnmA-like"/>
</dbReference>
<dbReference type="InterPro" id="IPR046885">
    <property type="entry name" value="MnmA-like_C"/>
</dbReference>
<dbReference type="InterPro" id="IPR046884">
    <property type="entry name" value="MnmA-like_central"/>
</dbReference>
<dbReference type="InterPro" id="IPR023382">
    <property type="entry name" value="MnmA-like_central_sf"/>
</dbReference>
<dbReference type="InterPro" id="IPR014729">
    <property type="entry name" value="Rossmann-like_a/b/a_fold"/>
</dbReference>
<dbReference type="NCBIfam" id="NF001138">
    <property type="entry name" value="PRK00143.1"/>
    <property type="match status" value="1"/>
</dbReference>
<dbReference type="NCBIfam" id="TIGR00420">
    <property type="entry name" value="trmU"/>
    <property type="match status" value="1"/>
</dbReference>
<dbReference type="PANTHER" id="PTHR11933:SF5">
    <property type="entry name" value="MITOCHONDRIAL TRNA-SPECIFIC 2-THIOURIDYLASE 1"/>
    <property type="match status" value="1"/>
</dbReference>
<dbReference type="PANTHER" id="PTHR11933">
    <property type="entry name" value="TRNA 5-METHYLAMINOMETHYL-2-THIOURIDYLATE -METHYLTRANSFERASE"/>
    <property type="match status" value="1"/>
</dbReference>
<dbReference type="Pfam" id="PF03054">
    <property type="entry name" value="tRNA_Me_trans"/>
    <property type="match status" value="1"/>
</dbReference>
<dbReference type="Pfam" id="PF20258">
    <property type="entry name" value="tRNA_Me_trans_C"/>
    <property type="match status" value="1"/>
</dbReference>
<dbReference type="Pfam" id="PF20259">
    <property type="entry name" value="tRNA_Me_trans_M"/>
    <property type="match status" value="1"/>
</dbReference>
<dbReference type="SUPFAM" id="SSF52402">
    <property type="entry name" value="Adenine nucleotide alpha hydrolases-like"/>
    <property type="match status" value="1"/>
</dbReference>
<accession>Q97T38</accession>